<organism>
    <name type="scientific">Camelpox virus (strain CMS)</name>
    <dbReference type="NCBI Taxonomy" id="203172"/>
    <lineage>
        <taxon>Viruses</taxon>
        <taxon>Varidnaviria</taxon>
        <taxon>Bamfordvirae</taxon>
        <taxon>Nucleocytoviricota</taxon>
        <taxon>Pokkesviricetes</taxon>
        <taxon>Chitovirales</taxon>
        <taxon>Poxviridae</taxon>
        <taxon>Chordopoxvirinae</taxon>
        <taxon>Orthopoxvirus</taxon>
        <taxon>Camelpox virus</taxon>
    </lineage>
</organism>
<sequence>MDNLFTFLHEIEDRYARTIFNFHLISCDEIGDIYGLMKERISSEDMFDNVVYNKDIHPAIKKLVYCDIQLTKHIINQNTYPVFNDSSQVKCCHYFDINSDNSNISSRTVEIFEREKSSLVSYIKTTNKKRKVNYGEIKKTVHGGTNANYFSGKKSDEYLSTTVRSNINQPWIKTISKRMRVDIINHSIVTRGKSSILQTIEIIFTNRTCVKIFKDSTMHIILSKDNDEKGCIHMIDKLFYVYYNLFLLFEDIIQNEYFKEVANVVNHVLTATALDEKLFLIKKMAEHDVYGVSNFKIGMFNLTFIKSLDHTVFPSLLDEDSKIKFFKGKKLNIVALRSLEDCINYVTKSENMIEMMKERSTILNSIDIETESVDRLKDLLLK</sequence>
<accession>Q775Q4</accession>
<feature type="chain" id="PRO_0000099186" description="Intermediate transcription factor 3 large subunit">
    <location>
        <begin position="1"/>
        <end position="382"/>
    </location>
</feature>
<proteinExistence type="inferred from homology"/>
<gene>
    <name type="primary">VITF3L</name>
    <name type="ordered locus">CMP140R</name>
</gene>
<organismHost>
    <name type="scientific">Camelus</name>
    <dbReference type="NCBI Taxonomy" id="9836"/>
</organismHost>
<reference key="1">
    <citation type="journal article" date="2002" name="J. Gen. Virol.">
        <title>The sequence of camelpox virus shows it is most closely related to variola virus, the cause of smallpox.</title>
        <authorList>
            <person name="Gubser C."/>
            <person name="Smith G.L."/>
        </authorList>
    </citation>
    <scope>NUCLEOTIDE SEQUENCE [LARGE SCALE GENOMIC DNA]</scope>
</reference>
<name>VTF3L_CAMPS</name>
<comment type="function">
    <text evidence="1">Acts with RNA polymerase to initiate transcription from intermediate gene promoters.</text>
</comment>
<comment type="subunit">
    <text evidence="1">Heterodimer of a 45 kDa and a 32 kDa subunit.</text>
</comment>
<comment type="similarity">
    <text evidence="2">Belongs to the poxviruses A23 family.</text>
</comment>
<keyword id="KW-0010">Activator</keyword>
<keyword id="KW-1185">Reference proteome</keyword>
<keyword id="KW-0804">Transcription</keyword>
<keyword id="KW-0805">Transcription regulation</keyword>
<evidence type="ECO:0000250" key="1"/>
<evidence type="ECO:0000305" key="2"/>
<dbReference type="EMBL" id="AY009089">
    <property type="protein sequence ID" value="AAG37632.1"/>
    <property type="molecule type" value="Genomic_DNA"/>
</dbReference>
<dbReference type="SMR" id="Q775Q4"/>
<dbReference type="Proteomes" id="UP000107153">
    <property type="component" value="Genome"/>
</dbReference>
<dbReference type="InterPro" id="IPR008789">
    <property type="entry name" value="Poxvirus_intermed-TF"/>
</dbReference>
<dbReference type="Pfam" id="PF05718">
    <property type="entry name" value="Pox_int_trans"/>
    <property type="match status" value="1"/>
</dbReference>
<protein>
    <recommendedName>
        <fullName>Intermediate transcription factor 3 large subunit</fullName>
    </recommendedName>
    <alternativeName>
        <fullName>VITF-3 45 kDa subunit</fullName>
    </alternativeName>
</protein>